<protein>
    <recommendedName>
        <fullName evidence="1">Phosphatidylserine decarboxylase proenzyme</fullName>
        <ecNumber evidence="1">4.1.1.65</ecNumber>
    </recommendedName>
    <component>
        <recommendedName>
            <fullName evidence="1">Phosphatidylserine decarboxylase alpha chain</fullName>
        </recommendedName>
    </component>
    <component>
        <recommendedName>
            <fullName evidence="1">Phosphatidylserine decarboxylase beta chain</fullName>
        </recommendedName>
    </component>
</protein>
<reference key="1">
    <citation type="submission" date="2007-11" db="EMBL/GenBank/DDBJ databases">
        <title>Genome sequencing of phylogenetically and phenotypically diverse Coxiella burnetii isolates.</title>
        <authorList>
            <person name="Seshadri R."/>
            <person name="Samuel J.E."/>
        </authorList>
    </citation>
    <scope>NUCLEOTIDE SEQUENCE [LARGE SCALE GENOMIC DNA]</scope>
    <source>
        <strain>RSA 331 / Henzerling II</strain>
    </source>
</reference>
<sequence>MTKLHKYLPQRTLSKIVGWLATREWGLLTQWAIRLFIRHYGINMQEAQYPDIGHYPSFNAFFTRYLKRELRPVVEEPRAIASPVDGIISEMGQIKGENLIQAKNHHYTITALLGEDPSRASQFLDGDFFTAYLAPKNYHRIHMPLDGRLIEMIHIPGKLFSVNPASVQTVPRLFARNERAVCLFETENGLMAVILVGAMLVGSINTVWHGTVVPTAEGIAVHNYREKNIKFKRGEEIGHFKMGSTVILLFPKNTIQWNPNCQPKGTICYGENIGTVSLIEVA</sequence>
<keyword id="KW-1003">Cell membrane</keyword>
<keyword id="KW-0210">Decarboxylase</keyword>
<keyword id="KW-0444">Lipid biosynthesis</keyword>
<keyword id="KW-0443">Lipid metabolism</keyword>
<keyword id="KW-0456">Lyase</keyword>
<keyword id="KW-0472">Membrane</keyword>
<keyword id="KW-0594">Phospholipid biosynthesis</keyword>
<keyword id="KW-1208">Phospholipid metabolism</keyword>
<keyword id="KW-0670">Pyruvate</keyword>
<keyword id="KW-0865">Zymogen</keyword>
<dbReference type="EC" id="4.1.1.65" evidence="1"/>
<dbReference type="EMBL" id="CP000890">
    <property type="protein sequence ID" value="ABX78469.1"/>
    <property type="molecule type" value="Genomic_DNA"/>
</dbReference>
<dbReference type="SMR" id="A9NAS0"/>
<dbReference type="KEGG" id="cbs:COXBURSA331_A2025"/>
<dbReference type="HOGENOM" id="CLU_029061_4_1_6"/>
<dbReference type="UniPathway" id="UPA00558">
    <property type="reaction ID" value="UER00616"/>
</dbReference>
<dbReference type="GO" id="GO:0005886">
    <property type="term" value="C:plasma membrane"/>
    <property type="evidence" value="ECO:0007669"/>
    <property type="project" value="UniProtKB-SubCell"/>
</dbReference>
<dbReference type="GO" id="GO:0004609">
    <property type="term" value="F:phosphatidylserine decarboxylase activity"/>
    <property type="evidence" value="ECO:0007669"/>
    <property type="project" value="UniProtKB-UniRule"/>
</dbReference>
<dbReference type="GO" id="GO:0006646">
    <property type="term" value="P:phosphatidylethanolamine biosynthetic process"/>
    <property type="evidence" value="ECO:0007669"/>
    <property type="project" value="UniProtKB-UniRule"/>
</dbReference>
<dbReference type="HAMAP" id="MF_00662">
    <property type="entry name" value="PS_decarb_PSD_B_type1"/>
    <property type="match status" value="1"/>
</dbReference>
<dbReference type="InterPro" id="IPR003817">
    <property type="entry name" value="PS_Dcarbxylase"/>
</dbReference>
<dbReference type="InterPro" id="IPR033177">
    <property type="entry name" value="PSD-B"/>
</dbReference>
<dbReference type="InterPro" id="IPR033178">
    <property type="entry name" value="PSD_type1_pro"/>
</dbReference>
<dbReference type="NCBIfam" id="TIGR00163">
    <property type="entry name" value="PS_decarb"/>
    <property type="match status" value="1"/>
</dbReference>
<dbReference type="PANTHER" id="PTHR10067">
    <property type="entry name" value="PHOSPHATIDYLSERINE DECARBOXYLASE"/>
    <property type="match status" value="1"/>
</dbReference>
<dbReference type="PANTHER" id="PTHR10067:SF6">
    <property type="entry name" value="PHOSPHATIDYLSERINE DECARBOXYLASE PROENZYME, MITOCHONDRIAL"/>
    <property type="match status" value="1"/>
</dbReference>
<dbReference type="Pfam" id="PF02666">
    <property type="entry name" value="PS_Dcarbxylase"/>
    <property type="match status" value="1"/>
</dbReference>
<evidence type="ECO:0000255" key="1">
    <source>
        <dbReference type="HAMAP-Rule" id="MF_00662"/>
    </source>
</evidence>
<proteinExistence type="inferred from homology"/>
<accession>A9NAS0</accession>
<feature type="chain" id="PRO_1000082888" description="Phosphatidylserine decarboxylase beta chain" evidence="1">
    <location>
        <begin position="1"/>
        <end position="243"/>
    </location>
</feature>
<feature type="chain" id="PRO_1000082889" description="Phosphatidylserine decarboxylase alpha chain" evidence="1">
    <location>
        <begin position="244"/>
        <end position="282"/>
    </location>
</feature>
<feature type="active site" description="Charge relay system; for autoendoproteolytic cleavage activity" evidence="1">
    <location>
        <position position="85"/>
    </location>
</feature>
<feature type="active site" description="Charge relay system; for autoendoproteolytic cleavage activity" evidence="1">
    <location>
        <position position="142"/>
    </location>
</feature>
<feature type="active site" description="Charge relay system; for autoendoproteolytic cleavage activity" evidence="1">
    <location>
        <position position="244"/>
    </location>
</feature>
<feature type="active site" description="Schiff-base intermediate with substrate; via pyruvic acid; for decarboxylase activity" evidence="1">
    <location>
        <position position="244"/>
    </location>
</feature>
<feature type="site" description="Cleavage (non-hydrolytic); by autocatalysis" evidence="1">
    <location>
        <begin position="243"/>
        <end position="244"/>
    </location>
</feature>
<feature type="modified residue" description="Pyruvic acid (Ser); by autocatalysis" evidence="1">
    <location>
        <position position="244"/>
    </location>
</feature>
<name>PSD_COXBR</name>
<organism>
    <name type="scientific">Coxiella burnetii (strain RSA 331 / Henzerling II)</name>
    <dbReference type="NCBI Taxonomy" id="360115"/>
    <lineage>
        <taxon>Bacteria</taxon>
        <taxon>Pseudomonadati</taxon>
        <taxon>Pseudomonadota</taxon>
        <taxon>Gammaproteobacteria</taxon>
        <taxon>Legionellales</taxon>
        <taxon>Coxiellaceae</taxon>
        <taxon>Coxiella</taxon>
    </lineage>
</organism>
<gene>
    <name evidence="1" type="primary">psd</name>
    <name type="ordered locus">COXBURSA331_A2025</name>
</gene>
<comment type="function">
    <text evidence="1">Catalyzes the formation of phosphatidylethanolamine (PtdEtn) from phosphatidylserine (PtdSer).</text>
</comment>
<comment type="catalytic activity">
    <reaction evidence="1">
        <text>a 1,2-diacyl-sn-glycero-3-phospho-L-serine + H(+) = a 1,2-diacyl-sn-glycero-3-phosphoethanolamine + CO2</text>
        <dbReference type="Rhea" id="RHEA:20828"/>
        <dbReference type="ChEBI" id="CHEBI:15378"/>
        <dbReference type="ChEBI" id="CHEBI:16526"/>
        <dbReference type="ChEBI" id="CHEBI:57262"/>
        <dbReference type="ChEBI" id="CHEBI:64612"/>
        <dbReference type="EC" id="4.1.1.65"/>
    </reaction>
</comment>
<comment type="cofactor">
    <cofactor evidence="1">
        <name>pyruvate</name>
        <dbReference type="ChEBI" id="CHEBI:15361"/>
    </cofactor>
    <text evidence="1">Binds 1 pyruvoyl group covalently per subunit.</text>
</comment>
<comment type="pathway">
    <text evidence="1">Phospholipid metabolism; phosphatidylethanolamine biosynthesis; phosphatidylethanolamine from CDP-diacylglycerol: step 2/2.</text>
</comment>
<comment type="subunit">
    <text evidence="1">Heterodimer of a large membrane-associated beta subunit and a small pyruvoyl-containing alpha subunit.</text>
</comment>
<comment type="subcellular location">
    <subcellularLocation>
        <location evidence="1">Cell membrane</location>
        <topology evidence="1">Peripheral membrane protein</topology>
    </subcellularLocation>
</comment>
<comment type="PTM">
    <text evidence="1">Is synthesized initially as an inactive proenzyme. Formation of the active enzyme involves a self-maturation process in which the active site pyruvoyl group is generated from an internal serine residue via an autocatalytic post-translational modification. Two non-identical subunits are generated from the proenzyme in this reaction, and the pyruvate is formed at the N-terminus of the alpha chain, which is derived from the carboxyl end of the proenzyme. The autoendoproteolytic cleavage occurs by a canonical serine protease mechanism, in which the side chain hydroxyl group of the serine supplies its oxygen atom to form the C-terminus of the beta chain, while the remainder of the serine residue undergoes an oxidative deamination to produce ammonia and the pyruvoyl prosthetic group on the alpha chain. During this reaction, the Ser that is part of the protease active site of the proenzyme becomes the pyruvoyl prosthetic group, which constitutes an essential element of the active site of the mature decarboxylase.</text>
</comment>
<comment type="similarity">
    <text evidence="1">Belongs to the phosphatidylserine decarboxylase family. PSD-B subfamily. Prokaryotic type I sub-subfamily.</text>
</comment>